<comment type="function">
    <text evidence="2">Component of the cytochrome c oxidase, the last enzyme in the mitochondrial electron transport chain which drives oxidative phosphorylation. The respiratory chain contains 3 multisubunit complexes succinate dehydrogenase (complex II, CII), ubiquinol-cytochrome c oxidoreductase (cytochrome b-c1 complex, complex III, CIII) and cytochrome c oxidase (complex IV, CIV), that cooperate to transfer electrons derived from NADH and succinate to molecular oxygen, creating an electrochemical gradient over the inner membrane that drives transmembrane transport and the ATP synthase. Cytochrome c oxidase is the component of the respiratory chain that catalyzes the reduction of oxygen to water. Electrons originating from reduced cytochrome c in the intermembrane space (IMS) are transferred via the dinuclear copper A center (CU(A)) of subunit 2 and heme A of subunit 1 to the active site in subunit 1, a binuclear center (BNC) formed by heme A3 and copper B (CU(B)). The BNC reduces molecular oxygen to 2 water molecules using 4 electrons from cytochrome c in the IMS and 4 protons from the mitochondrial matrix.</text>
</comment>
<comment type="catalytic activity">
    <reaction evidence="2">
        <text>4 Fe(II)-[cytochrome c] + O2 + 8 H(+)(in) = 4 Fe(III)-[cytochrome c] + 2 H2O + 4 H(+)(out)</text>
        <dbReference type="Rhea" id="RHEA:11436"/>
        <dbReference type="Rhea" id="RHEA-COMP:10350"/>
        <dbReference type="Rhea" id="RHEA-COMP:14399"/>
        <dbReference type="ChEBI" id="CHEBI:15377"/>
        <dbReference type="ChEBI" id="CHEBI:15378"/>
        <dbReference type="ChEBI" id="CHEBI:15379"/>
        <dbReference type="ChEBI" id="CHEBI:29033"/>
        <dbReference type="ChEBI" id="CHEBI:29034"/>
        <dbReference type="EC" id="7.1.1.9"/>
    </reaction>
    <physiologicalReaction direction="left-to-right" evidence="2">
        <dbReference type="Rhea" id="RHEA:11437"/>
    </physiologicalReaction>
</comment>
<comment type="cofactor">
    <cofactor evidence="3">
        <name>Cu cation</name>
        <dbReference type="ChEBI" id="CHEBI:23378"/>
    </cofactor>
    <text evidence="3">Binds a dinuclear copper A center per subunit.</text>
</comment>
<comment type="subunit">
    <text evidence="1 3">Component of the cytochrome c oxidase (complex IV, CIV), a multisubunit enzyme composed of 14 subunits. The complex is composed of a catalytic core of 3 subunits MT-CO1, MT-CO2 and MT-CO3, encoded in the mitochondrial DNA, and 11 supernumerary subunits COX4I, COX5A, COX5B, COX6A, COX6B, COX6C, COX7A, COX7B, COX7C, COX8 and NDUFA4, which are encoded in the nuclear genome. The complex exists as a monomer or a dimer and forms supercomplexes (SCs) in the inner mitochondrial membrane with NADH-ubiquinone oxidoreductase (complex I, CI) and ubiquinol-cytochrome c oxidoreductase (cytochrome b-c1 complex, complex III, CIII), resulting in different assemblies (supercomplex SCI(1)III(2)IV(1) and megacomplex MCI(2)III(2)IV(2)) (By similarity). Found in a complex with TMEM177, COA6, COX18, COX20, SCO1 and SCO2. Interacts with TMEM177 in a COX20-dependent manner. Interacts with COX20. Interacts with COX16 (By similarity).</text>
</comment>
<comment type="subcellular location">
    <subcellularLocation>
        <location evidence="3">Mitochondrion inner membrane</location>
        <topology evidence="3">Multi-pass membrane protein</topology>
    </subcellularLocation>
</comment>
<comment type="similarity">
    <text evidence="4">Belongs to the cytochrome c oxidase subunit 2 family.</text>
</comment>
<name>COX2_GERVA</name>
<keyword id="KW-0186">Copper</keyword>
<keyword id="KW-0249">Electron transport</keyword>
<keyword id="KW-0460">Magnesium</keyword>
<keyword id="KW-0472">Membrane</keyword>
<keyword id="KW-0479">Metal-binding</keyword>
<keyword id="KW-0496">Mitochondrion</keyword>
<keyword id="KW-0999">Mitochondrion inner membrane</keyword>
<keyword id="KW-0679">Respiratory chain</keyword>
<keyword id="KW-1278">Translocase</keyword>
<keyword id="KW-0812">Transmembrane</keyword>
<keyword id="KW-1133">Transmembrane helix</keyword>
<keyword id="KW-0813">Transport</keyword>
<reference key="1">
    <citation type="journal article" date="1996" name="Mol. Biol. Evol.">
        <title>Evolution of eutherian cytochrome c oxidase subunit II: heterogeneous rates of protein evolution and altered interaction with cytochrome c.</title>
        <authorList>
            <person name="Adkins R.M."/>
            <person name="Honeycutt R.L."/>
            <person name="Disotell T.R."/>
        </authorList>
    </citation>
    <scope>NUCLEOTIDE SEQUENCE [GENOMIC DNA]</scope>
</reference>
<feature type="chain" id="PRO_0000254922" description="Cytochrome c oxidase subunit 2">
    <location>
        <begin position="1"/>
        <end position="227"/>
    </location>
</feature>
<feature type="topological domain" description="Mitochondrial intermembrane" evidence="3">
    <location>
        <begin position="1"/>
        <end position="14"/>
    </location>
</feature>
<feature type="transmembrane region" description="Helical; Name=I" evidence="3">
    <location>
        <begin position="15"/>
        <end position="45"/>
    </location>
</feature>
<feature type="topological domain" description="Mitochondrial matrix" evidence="3">
    <location>
        <begin position="46"/>
        <end position="59"/>
    </location>
</feature>
<feature type="transmembrane region" description="Helical; Name=II" evidence="3">
    <location>
        <begin position="60"/>
        <end position="87"/>
    </location>
</feature>
<feature type="topological domain" description="Mitochondrial intermembrane" evidence="3">
    <location>
        <begin position="88"/>
        <end position="227"/>
    </location>
</feature>
<feature type="binding site" evidence="3">
    <location>
        <position position="161"/>
    </location>
    <ligand>
        <name>Cu cation</name>
        <dbReference type="ChEBI" id="CHEBI:23378"/>
        <label>A1</label>
    </ligand>
</feature>
<feature type="binding site" evidence="3">
    <location>
        <position position="196"/>
    </location>
    <ligand>
        <name>Cu cation</name>
        <dbReference type="ChEBI" id="CHEBI:23378"/>
        <label>A1</label>
    </ligand>
</feature>
<feature type="binding site" evidence="3">
    <location>
        <position position="196"/>
    </location>
    <ligand>
        <name>Cu cation</name>
        <dbReference type="ChEBI" id="CHEBI:23378"/>
        <label>A2</label>
    </ligand>
</feature>
<feature type="binding site" evidence="3">
    <location>
        <position position="198"/>
    </location>
    <ligand>
        <name>Cu cation</name>
        <dbReference type="ChEBI" id="CHEBI:23378"/>
        <label>A2</label>
    </ligand>
</feature>
<feature type="binding site" evidence="3">
    <location>
        <position position="198"/>
    </location>
    <ligand>
        <name>Mg(2+)</name>
        <dbReference type="ChEBI" id="CHEBI:18420"/>
        <note>ligand shared with MT-CO1</note>
    </ligand>
</feature>
<feature type="binding site" evidence="3">
    <location>
        <position position="200"/>
    </location>
    <ligand>
        <name>Cu cation</name>
        <dbReference type="ChEBI" id="CHEBI:23378"/>
        <label>A1</label>
    </ligand>
</feature>
<feature type="binding site" evidence="3">
    <location>
        <position position="200"/>
    </location>
    <ligand>
        <name>Cu cation</name>
        <dbReference type="ChEBI" id="CHEBI:23378"/>
        <label>A2</label>
    </ligand>
</feature>
<feature type="binding site" evidence="3">
    <location>
        <position position="204"/>
    </location>
    <ligand>
        <name>Cu cation</name>
        <dbReference type="ChEBI" id="CHEBI:23378"/>
        <label>A2</label>
    </ligand>
</feature>
<feature type="binding site" evidence="3">
    <location>
        <position position="207"/>
    </location>
    <ligand>
        <name>Cu cation</name>
        <dbReference type="ChEBI" id="CHEBI:23378"/>
        <label>A1</label>
    </ligand>
</feature>
<geneLocation type="mitochondrion"/>
<dbReference type="EC" id="7.1.1.9"/>
<dbReference type="EMBL" id="U62574">
    <property type="protein sequence ID" value="AAB05785.1"/>
    <property type="molecule type" value="Genomic_DNA"/>
</dbReference>
<dbReference type="SMR" id="Q37476"/>
<dbReference type="GO" id="GO:0005743">
    <property type="term" value="C:mitochondrial inner membrane"/>
    <property type="evidence" value="ECO:0007669"/>
    <property type="project" value="UniProtKB-SubCell"/>
</dbReference>
<dbReference type="GO" id="GO:0045277">
    <property type="term" value="C:respiratory chain complex IV"/>
    <property type="evidence" value="ECO:0000250"/>
    <property type="project" value="UniProtKB"/>
</dbReference>
<dbReference type="GO" id="GO:0005507">
    <property type="term" value="F:copper ion binding"/>
    <property type="evidence" value="ECO:0007669"/>
    <property type="project" value="InterPro"/>
</dbReference>
<dbReference type="GO" id="GO:0004129">
    <property type="term" value="F:cytochrome-c oxidase activity"/>
    <property type="evidence" value="ECO:0007669"/>
    <property type="project" value="UniProtKB-EC"/>
</dbReference>
<dbReference type="GO" id="GO:0042773">
    <property type="term" value="P:ATP synthesis coupled electron transport"/>
    <property type="evidence" value="ECO:0007669"/>
    <property type="project" value="TreeGrafter"/>
</dbReference>
<dbReference type="CDD" id="cd13912">
    <property type="entry name" value="CcO_II_C"/>
    <property type="match status" value="1"/>
</dbReference>
<dbReference type="FunFam" id="1.10.287.90:FF:000001">
    <property type="entry name" value="Cytochrome c oxidase subunit 2"/>
    <property type="match status" value="1"/>
</dbReference>
<dbReference type="FunFam" id="2.60.40.420:FF:000001">
    <property type="entry name" value="Cytochrome c oxidase subunit 2"/>
    <property type="match status" value="1"/>
</dbReference>
<dbReference type="Gene3D" id="1.10.287.90">
    <property type="match status" value="1"/>
</dbReference>
<dbReference type="Gene3D" id="2.60.40.420">
    <property type="entry name" value="Cupredoxins - blue copper proteins"/>
    <property type="match status" value="1"/>
</dbReference>
<dbReference type="InterPro" id="IPR045187">
    <property type="entry name" value="CcO_II"/>
</dbReference>
<dbReference type="InterPro" id="IPR002429">
    <property type="entry name" value="CcO_II-like_C"/>
</dbReference>
<dbReference type="InterPro" id="IPR034210">
    <property type="entry name" value="CcO_II_C"/>
</dbReference>
<dbReference type="InterPro" id="IPR001505">
    <property type="entry name" value="Copper_CuA"/>
</dbReference>
<dbReference type="InterPro" id="IPR008972">
    <property type="entry name" value="Cupredoxin"/>
</dbReference>
<dbReference type="InterPro" id="IPR014222">
    <property type="entry name" value="Cyt_c_oxidase_su2"/>
</dbReference>
<dbReference type="InterPro" id="IPR011759">
    <property type="entry name" value="Cyt_c_oxidase_su2_TM_dom"/>
</dbReference>
<dbReference type="InterPro" id="IPR036257">
    <property type="entry name" value="Cyt_c_oxidase_su2_TM_sf"/>
</dbReference>
<dbReference type="NCBIfam" id="TIGR02866">
    <property type="entry name" value="CoxB"/>
    <property type="match status" value="1"/>
</dbReference>
<dbReference type="PANTHER" id="PTHR22888:SF9">
    <property type="entry name" value="CYTOCHROME C OXIDASE SUBUNIT 2"/>
    <property type="match status" value="1"/>
</dbReference>
<dbReference type="PANTHER" id="PTHR22888">
    <property type="entry name" value="CYTOCHROME C OXIDASE, SUBUNIT II"/>
    <property type="match status" value="1"/>
</dbReference>
<dbReference type="Pfam" id="PF00116">
    <property type="entry name" value="COX2"/>
    <property type="match status" value="1"/>
</dbReference>
<dbReference type="Pfam" id="PF02790">
    <property type="entry name" value="COX2_TM"/>
    <property type="match status" value="1"/>
</dbReference>
<dbReference type="PRINTS" id="PR01166">
    <property type="entry name" value="CYCOXIDASEII"/>
</dbReference>
<dbReference type="SUPFAM" id="SSF49503">
    <property type="entry name" value="Cupredoxins"/>
    <property type="match status" value="1"/>
</dbReference>
<dbReference type="SUPFAM" id="SSF81464">
    <property type="entry name" value="Cytochrome c oxidase subunit II-like, transmembrane region"/>
    <property type="match status" value="1"/>
</dbReference>
<dbReference type="PROSITE" id="PS00078">
    <property type="entry name" value="COX2"/>
    <property type="match status" value="1"/>
</dbReference>
<dbReference type="PROSITE" id="PS50857">
    <property type="entry name" value="COX2_CUA"/>
    <property type="match status" value="1"/>
</dbReference>
<dbReference type="PROSITE" id="PS50999">
    <property type="entry name" value="COX2_TM"/>
    <property type="match status" value="1"/>
</dbReference>
<organism>
    <name type="scientific">Gerbillurus vallinus</name>
    <name type="common">Brush-tailed hairy-footed gerbil</name>
    <dbReference type="NCBI Taxonomy" id="49440"/>
    <lineage>
        <taxon>Eukaryota</taxon>
        <taxon>Metazoa</taxon>
        <taxon>Chordata</taxon>
        <taxon>Craniata</taxon>
        <taxon>Vertebrata</taxon>
        <taxon>Euteleostomi</taxon>
        <taxon>Mammalia</taxon>
        <taxon>Eutheria</taxon>
        <taxon>Euarchontoglires</taxon>
        <taxon>Glires</taxon>
        <taxon>Rodentia</taxon>
        <taxon>Myomorpha</taxon>
        <taxon>Muroidea</taxon>
        <taxon>Muridae</taxon>
        <taxon>Gerbillinae</taxon>
        <taxon>Gerbillurus</taxon>
    </lineage>
</organism>
<gene>
    <name type="primary">MT-CO2</name>
    <name type="synonym">COII</name>
    <name type="synonym">COX2</name>
    <name type="synonym">COXII</name>
    <name type="synonym">MTCO2</name>
</gene>
<proteinExistence type="inferred from homology"/>
<protein>
    <recommendedName>
        <fullName>Cytochrome c oxidase subunit 2</fullName>
        <ecNumber>7.1.1.9</ecNumber>
    </recommendedName>
    <alternativeName>
        <fullName>Cytochrome c oxidase polypeptide II</fullName>
    </alternativeName>
</protein>
<evidence type="ECO:0000250" key="1">
    <source>
        <dbReference type="UniProtKB" id="P00403"/>
    </source>
</evidence>
<evidence type="ECO:0000250" key="2">
    <source>
        <dbReference type="UniProtKB" id="P00410"/>
    </source>
</evidence>
<evidence type="ECO:0000250" key="3">
    <source>
        <dbReference type="UniProtKB" id="P68530"/>
    </source>
</evidence>
<evidence type="ECO:0000305" key="4"/>
<accession>Q37476</accession>
<sequence>MAYPFQLGLQDATSPIMEELTNFHDHTLMIVFLISSLVLYLISLMLTTKLIHTNTMDAQEVETVWTILPAIILIMIALPSLRILYLMDEINNPVLTVKTMGHQWYWSYEYTDYEDLCFDSYMTPTNELKPGELRLLEVDNRVVLPMELPIRMLISSEDVLHSWAVPSLGLKTDAIPGRLNQATITSNRPGVFYGQCSEICGSNHSFMPIVLEMIPLKLFENWSTSMI</sequence>